<organism>
    <name type="scientific">Staphylococcus aureus (strain N315)</name>
    <dbReference type="NCBI Taxonomy" id="158879"/>
    <lineage>
        <taxon>Bacteria</taxon>
        <taxon>Bacillati</taxon>
        <taxon>Bacillota</taxon>
        <taxon>Bacilli</taxon>
        <taxon>Bacillales</taxon>
        <taxon>Staphylococcaceae</taxon>
        <taxon>Staphylococcus</taxon>
    </lineage>
</organism>
<protein>
    <recommendedName>
        <fullName>Probable quinol oxidase subunit 3</fullName>
        <ecNumber>1.10.3.-</ecNumber>
    </recommendedName>
    <alternativeName>
        <fullName>Quinol oxidase polypeptide III</fullName>
    </alternativeName>
</protein>
<dbReference type="EC" id="1.10.3.-"/>
<dbReference type="EMBL" id="BA000018">
    <property type="protein sequence ID" value="BAB42156.1"/>
    <property type="molecule type" value="Genomic_DNA"/>
</dbReference>
<dbReference type="PIR" id="A89875">
    <property type="entry name" value="A89875"/>
</dbReference>
<dbReference type="RefSeq" id="WP_000017736.1">
    <property type="nucleotide sequence ID" value="NC_002745.2"/>
</dbReference>
<dbReference type="SMR" id="Q7A6A0"/>
<dbReference type="EnsemblBacteria" id="BAB42156">
    <property type="protein sequence ID" value="BAB42156"/>
    <property type="gene ID" value="BAB42156"/>
</dbReference>
<dbReference type="GeneID" id="66839255"/>
<dbReference type="KEGG" id="sau:SA0911"/>
<dbReference type="HOGENOM" id="CLU_044071_3_2_9"/>
<dbReference type="GO" id="GO:0005886">
    <property type="term" value="C:plasma membrane"/>
    <property type="evidence" value="ECO:0007669"/>
    <property type="project" value="UniProtKB-SubCell"/>
</dbReference>
<dbReference type="GO" id="GO:0004129">
    <property type="term" value="F:cytochrome-c oxidase activity"/>
    <property type="evidence" value="ECO:0007669"/>
    <property type="project" value="InterPro"/>
</dbReference>
<dbReference type="GO" id="GO:0019646">
    <property type="term" value="P:aerobic electron transport chain"/>
    <property type="evidence" value="ECO:0007669"/>
    <property type="project" value="InterPro"/>
</dbReference>
<dbReference type="GO" id="GO:0042773">
    <property type="term" value="P:ATP synthesis coupled electron transport"/>
    <property type="evidence" value="ECO:0007669"/>
    <property type="project" value="InterPro"/>
</dbReference>
<dbReference type="CDD" id="cd02863">
    <property type="entry name" value="Ubiquinol_oxidase_III"/>
    <property type="match status" value="1"/>
</dbReference>
<dbReference type="FunFam" id="1.20.120.80:FF:000001">
    <property type="entry name" value="Cytochrome (Ubi)quinol oxidase subunit III"/>
    <property type="match status" value="1"/>
</dbReference>
<dbReference type="Gene3D" id="1.20.120.80">
    <property type="entry name" value="Cytochrome c oxidase, subunit III, four-helix bundle"/>
    <property type="match status" value="1"/>
</dbReference>
<dbReference type="InterPro" id="IPR024791">
    <property type="entry name" value="Cyt_c/ubiquinol_Oxase_su3"/>
</dbReference>
<dbReference type="InterPro" id="IPR000298">
    <property type="entry name" value="Cyt_c_oxidase-like_su3"/>
</dbReference>
<dbReference type="InterPro" id="IPR035973">
    <property type="entry name" value="Cyt_c_oxidase_su3-like_sf"/>
</dbReference>
<dbReference type="InterPro" id="IPR013833">
    <property type="entry name" value="Cyt_c_oxidase_su3_a-hlx"/>
</dbReference>
<dbReference type="InterPro" id="IPR014246">
    <property type="entry name" value="QoxC"/>
</dbReference>
<dbReference type="InterPro" id="IPR033946">
    <property type="entry name" value="Ubiquinol_oxase_su3_dom"/>
</dbReference>
<dbReference type="NCBIfam" id="TIGR02897">
    <property type="entry name" value="QoxC"/>
    <property type="match status" value="1"/>
</dbReference>
<dbReference type="PANTHER" id="PTHR11403:SF2">
    <property type="entry name" value="CYTOCHROME BO(3) UBIQUINOL OXIDASE SUBUNIT 3"/>
    <property type="match status" value="1"/>
</dbReference>
<dbReference type="PANTHER" id="PTHR11403">
    <property type="entry name" value="CYTOCHROME C OXIDASE SUBUNIT III"/>
    <property type="match status" value="1"/>
</dbReference>
<dbReference type="Pfam" id="PF00510">
    <property type="entry name" value="COX3"/>
    <property type="match status" value="1"/>
</dbReference>
<dbReference type="SUPFAM" id="SSF81452">
    <property type="entry name" value="Cytochrome c oxidase subunit III-like"/>
    <property type="match status" value="1"/>
</dbReference>
<dbReference type="PROSITE" id="PS50253">
    <property type="entry name" value="COX3"/>
    <property type="match status" value="1"/>
</dbReference>
<gene>
    <name type="primary">qoxC</name>
    <name type="ordered locus">SA0911</name>
</gene>
<name>QOX3_STAAN</name>
<keyword id="KW-1003">Cell membrane</keyword>
<keyword id="KW-0472">Membrane</keyword>
<keyword id="KW-0560">Oxidoreductase</keyword>
<keyword id="KW-0812">Transmembrane</keyword>
<keyword id="KW-1133">Transmembrane helix</keyword>
<feature type="chain" id="PRO_0000275890" description="Probable quinol oxidase subunit 3">
    <location>
        <begin position="1"/>
        <end position="201"/>
    </location>
</feature>
<feature type="transmembrane region" description="Helical" evidence="2">
    <location>
        <begin position="20"/>
        <end position="40"/>
    </location>
</feature>
<feature type="transmembrane region" description="Helical" evidence="2">
    <location>
        <begin position="62"/>
        <end position="82"/>
    </location>
</feature>
<feature type="transmembrane region" description="Helical" evidence="2">
    <location>
        <begin position="91"/>
        <end position="111"/>
    </location>
</feature>
<feature type="transmembrane region" description="Helical" evidence="2">
    <location>
        <begin position="133"/>
        <end position="153"/>
    </location>
</feature>
<feature type="transmembrane region" description="Helical" evidence="2">
    <location>
        <begin position="172"/>
        <end position="192"/>
    </location>
</feature>
<sequence length="201" mass="23057">MSHDTNTIDSRTHEGELNKLGFWIFITAEFALFGTLFATLLTLQHGGDYAGKMTTELFELPLVLIMTFALLFSSYTCGIAIYYMRQEKQKLMMFWMIITLLLGLVFVGFEIYEFAHYASEGVNPTIGSYWSSFFILLGTHGCHVSLGIVWAICLLIQIQRRGLDKYNAPKLFIVSLYWHFLDVVWVFIFTAVYMIGMVYSG</sequence>
<comment type="function">
    <text evidence="1">Catalyzes quinol oxidation with the concomitant reduction of oxygen to water.</text>
</comment>
<comment type="catalytic activity">
    <reaction>
        <text>2 a quinol + O2 = 2 a quinone + 2 H2O</text>
        <dbReference type="Rhea" id="RHEA:55376"/>
        <dbReference type="ChEBI" id="CHEBI:15377"/>
        <dbReference type="ChEBI" id="CHEBI:15379"/>
        <dbReference type="ChEBI" id="CHEBI:24646"/>
        <dbReference type="ChEBI" id="CHEBI:132124"/>
    </reaction>
</comment>
<comment type="subcellular location">
    <subcellularLocation>
        <location evidence="1">Cell membrane</location>
        <topology evidence="1">Multi-pass membrane protein</topology>
    </subcellularLocation>
</comment>
<comment type="similarity">
    <text evidence="3">Belongs to the cytochrome c oxidase subunit 3 family.</text>
</comment>
<reference key="1">
    <citation type="journal article" date="2001" name="Lancet">
        <title>Whole genome sequencing of meticillin-resistant Staphylococcus aureus.</title>
        <authorList>
            <person name="Kuroda M."/>
            <person name="Ohta T."/>
            <person name="Uchiyama I."/>
            <person name="Baba T."/>
            <person name="Yuzawa H."/>
            <person name="Kobayashi I."/>
            <person name="Cui L."/>
            <person name="Oguchi A."/>
            <person name="Aoki K."/>
            <person name="Nagai Y."/>
            <person name="Lian J.-Q."/>
            <person name="Ito T."/>
            <person name="Kanamori M."/>
            <person name="Matsumaru H."/>
            <person name="Maruyama A."/>
            <person name="Murakami H."/>
            <person name="Hosoyama A."/>
            <person name="Mizutani-Ui Y."/>
            <person name="Takahashi N.K."/>
            <person name="Sawano T."/>
            <person name="Inoue R."/>
            <person name="Kaito C."/>
            <person name="Sekimizu K."/>
            <person name="Hirakawa H."/>
            <person name="Kuhara S."/>
            <person name="Goto S."/>
            <person name="Yabuzaki J."/>
            <person name="Kanehisa M."/>
            <person name="Yamashita A."/>
            <person name="Oshima K."/>
            <person name="Furuya K."/>
            <person name="Yoshino C."/>
            <person name="Shiba T."/>
            <person name="Hattori M."/>
            <person name="Ogasawara N."/>
            <person name="Hayashi H."/>
            <person name="Hiramatsu K."/>
        </authorList>
    </citation>
    <scope>NUCLEOTIDE SEQUENCE [LARGE SCALE GENOMIC DNA]</scope>
    <source>
        <strain>N315</strain>
    </source>
</reference>
<accession>Q7A6A0</accession>
<proteinExistence type="inferred from homology"/>
<evidence type="ECO:0000250" key="1"/>
<evidence type="ECO:0000255" key="2"/>
<evidence type="ECO:0000305" key="3"/>